<protein>
    <recommendedName>
        <fullName evidence="1">Lon protease</fullName>
        <ecNumber evidence="1">3.4.21.53</ecNumber>
    </recommendedName>
    <alternativeName>
        <fullName evidence="1">ATP-dependent protease La</fullName>
    </alternativeName>
</protein>
<organism>
    <name type="scientific">Buchnera aphidicola subsp. Baizongia pistaciae (strain Bp)</name>
    <dbReference type="NCBI Taxonomy" id="224915"/>
    <lineage>
        <taxon>Bacteria</taxon>
        <taxon>Pseudomonadati</taxon>
        <taxon>Pseudomonadota</taxon>
        <taxon>Gammaproteobacteria</taxon>
        <taxon>Enterobacterales</taxon>
        <taxon>Erwiniaceae</taxon>
        <taxon>Buchnera</taxon>
    </lineage>
</organism>
<feature type="chain" id="PRO_0000076127" description="Lon protease">
    <location>
        <begin position="1"/>
        <end position="780"/>
    </location>
</feature>
<feature type="domain" description="Lon N-terminal" evidence="3">
    <location>
        <begin position="11"/>
        <end position="204"/>
    </location>
</feature>
<feature type="domain" description="Lon proteolytic" evidence="2">
    <location>
        <begin position="592"/>
        <end position="773"/>
    </location>
</feature>
<feature type="active site" evidence="1">
    <location>
        <position position="679"/>
    </location>
</feature>
<feature type="active site" evidence="1">
    <location>
        <position position="722"/>
    </location>
</feature>
<feature type="binding site" evidence="1">
    <location>
        <begin position="356"/>
        <end position="363"/>
    </location>
    <ligand>
        <name>ATP</name>
        <dbReference type="ChEBI" id="CHEBI:30616"/>
    </ligand>
</feature>
<dbReference type="EC" id="3.4.21.53" evidence="1"/>
<dbReference type="EMBL" id="AE016826">
    <property type="protein sequence ID" value="AAO27131.1"/>
    <property type="molecule type" value="Genomic_DNA"/>
</dbReference>
<dbReference type="RefSeq" id="WP_011091532.1">
    <property type="nucleotide sequence ID" value="NC_004545.1"/>
</dbReference>
<dbReference type="SMR" id="Q89A99"/>
<dbReference type="STRING" id="224915.bbp_421"/>
<dbReference type="MEROPS" id="S16.001"/>
<dbReference type="KEGG" id="bab:bbp_421"/>
<dbReference type="eggNOG" id="COG0466">
    <property type="taxonomic scope" value="Bacteria"/>
</dbReference>
<dbReference type="HOGENOM" id="CLU_004109_4_3_6"/>
<dbReference type="OrthoDB" id="9803599at2"/>
<dbReference type="Proteomes" id="UP000000601">
    <property type="component" value="Chromosome"/>
</dbReference>
<dbReference type="GO" id="GO:0005737">
    <property type="term" value="C:cytoplasm"/>
    <property type="evidence" value="ECO:0007669"/>
    <property type="project" value="UniProtKB-SubCell"/>
</dbReference>
<dbReference type="GO" id="GO:0005524">
    <property type="term" value="F:ATP binding"/>
    <property type="evidence" value="ECO:0007669"/>
    <property type="project" value="UniProtKB-UniRule"/>
</dbReference>
<dbReference type="GO" id="GO:0016887">
    <property type="term" value="F:ATP hydrolysis activity"/>
    <property type="evidence" value="ECO:0007669"/>
    <property type="project" value="UniProtKB-UniRule"/>
</dbReference>
<dbReference type="GO" id="GO:0004176">
    <property type="term" value="F:ATP-dependent peptidase activity"/>
    <property type="evidence" value="ECO:0007669"/>
    <property type="project" value="UniProtKB-UniRule"/>
</dbReference>
<dbReference type="GO" id="GO:0043565">
    <property type="term" value="F:sequence-specific DNA binding"/>
    <property type="evidence" value="ECO:0007669"/>
    <property type="project" value="UniProtKB-UniRule"/>
</dbReference>
<dbReference type="GO" id="GO:0004252">
    <property type="term" value="F:serine-type endopeptidase activity"/>
    <property type="evidence" value="ECO:0007669"/>
    <property type="project" value="UniProtKB-UniRule"/>
</dbReference>
<dbReference type="GO" id="GO:0034605">
    <property type="term" value="P:cellular response to heat"/>
    <property type="evidence" value="ECO:0007669"/>
    <property type="project" value="UniProtKB-UniRule"/>
</dbReference>
<dbReference type="GO" id="GO:0006515">
    <property type="term" value="P:protein quality control for misfolded or incompletely synthesized proteins"/>
    <property type="evidence" value="ECO:0007669"/>
    <property type="project" value="UniProtKB-UniRule"/>
</dbReference>
<dbReference type="CDD" id="cd19500">
    <property type="entry name" value="RecA-like_Lon"/>
    <property type="match status" value="1"/>
</dbReference>
<dbReference type="FunFam" id="1.10.8.60:FF:000035">
    <property type="entry name" value="Lon protease"/>
    <property type="match status" value="1"/>
</dbReference>
<dbReference type="FunFam" id="1.20.58.1480:FF:000001">
    <property type="entry name" value="Lon protease"/>
    <property type="match status" value="1"/>
</dbReference>
<dbReference type="FunFam" id="2.30.130.40:FF:000001">
    <property type="entry name" value="Lon protease"/>
    <property type="match status" value="1"/>
</dbReference>
<dbReference type="FunFam" id="3.30.230.10:FF:000010">
    <property type="entry name" value="Lon protease"/>
    <property type="match status" value="1"/>
</dbReference>
<dbReference type="FunFam" id="1.20.5.5270:FF:000002">
    <property type="entry name" value="Lon protease homolog"/>
    <property type="match status" value="1"/>
</dbReference>
<dbReference type="FunFam" id="3.40.50.300:FF:000021">
    <property type="entry name" value="Lon protease homolog"/>
    <property type="match status" value="1"/>
</dbReference>
<dbReference type="Gene3D" id="1.10.8.60">
    <property type="match status" value="1"/>
</dbReference>
<dbReference type="Gene3D" id="1.20.5.5270">
    <property type="match status" value="1"/>
</dbReference>
<dbReference type="Gene3D" id="1.20.58.1480">
    <property type="match status" value="1"/>
</dbReference>
<dbReference type="Gene3D" id="3.30.230.10">
    <property type="match status" value="1"/>
</dbReference>
<dbReference type="Gene3D" id="2.30.130.40">
    <property type="entry name" value="LON domain-like"/>
    <property type="match status" value="1"/>
</dbReference>
<dbReference type="Gene3D" id="3.40.50.300">
    <property type="entry name" value="P-loop containing nucleotide triphosphate hydrolases"/>
    <property type="match status" value="1"/>
</dbReference>
<dbReference type="HAMAP" id="MF_01973">
    <property type="entry name" value="lon_bact"/>
    <property type="match status" value="1"/>
</dbReference>
<dbReference type="InterPro" id="IPR003593">
    <property type="entry name" value="AAA+_ATPase"/>
</dbReference>
<dbReference type="InterPro" id="IPR003959">
    <property type="entry name" value="ATPase_AAA_core"/>
</dbReference>
<dbReference type="InterPro" id="IPR027543">
    <property type="entry name" value="Lon_bac"/>
</dbReference>
<dbReference type="InterPro" id="IPR004815">
    <property type="entry name" value="Lon_bac/euk-typ"/>
</dbReference>
<dbReference type="InterPro" id="IPR054594">
    <property type="entry name" value="Lon_lid"/>
</dbReference>
<dbReference type="InterPro" id="IPR008269">
    <property type="entry name" value="Lon_proteolytic"/>
</dbReference>
<dbReference type="InterPro" id="IPR027065">
    <property type="entry name" value="Lon_Prtase"/>
</dbReference>
<dbReference type="InterPro" id="IPR003111">
    <property type="entry name" value="Lon_prtase_N"/>
</dbReference>
<dbReference type="InterPro" id="IPR046336">
    <property type="entry name" value="Lon_prtase_N_sf"/>
</dbReference>
<dbReference type="InterPro" id="IPR027417">
    <property type="entry name" value="P-loop_NTPase"/>
</dbReference>
<dbReference type="InterPro" id="IPR008268">
    <property type="entry name" value="Peptidase_S16_AS"/>
</dbReference>
<dbReference type="InterPro" id="IPR015947">
    <property type="entry name" value="PUA-like_sf"/>
</dbReference>
<dbReference type="InterPro" id="IPR020568">
    <property type="entry name" value="Ribosomal_Su5_D2-typ_SF"/>
</dbReference>
<dbReference type="InterPro" id="IPR014721">
    <property type="entry name" value="Ribsml_uS5_D2-typ_fold_subgr"/>
</dbReference>
<dbReference type="NCBIfam" id="TIGR00763">
    <property type="entry name" value="lon"/>
    <property type="match status" value="1"/>
</dbReference>
<dbReference type="NCBIfam" id="NF008053">
    <property type="entry name" value="PRK10787.1"/>
    <property type="match status" value="1"/>
</dbReference>
<dbReference type="PANTHER" id="PTHR10046">
    <property type="entry name" value="ATP DEPENDENT LON PROTEASE FAMILY MEMBER"/>
    <property type="match status" value="1"/>
</dbReference>
<dbReference type="Pfam" id="PF00004">
    <property type="entry name" value="AAA"/>
    <property type="match status" value="1"/>
</dbReference>
<dbReference type="Pfam" id="PF05362">
    <property type="entry name" value="Lon_C"/>
    <property type="match status" value="1"/>
</dbReference>
<dbReference type="Pfam" id="PF22667">
    <property type="entry name" value="Lon_lid"/>
    <property type="match status" value="1"/>
</dbReference>
<dbReference type="Pfam" id="PF02190">
    <property type="entry name" value="LON_substr_bdg"/>
    <property type="match status" value="1"/>
</dbReference>
<dbReference type="PIRSF" id="PIRSF001174">
    <property type="entry name" value="Lon_proteas"/>
    <property type="match status" value="1"/>
</dbReference>
<dbReference type="PRINTS" id="PR00830">
    <property type="entry name" value="ENDOLAPTASE"/>
</dbReference>
<dbReference type="SMART" id="SM00382">
    <property type="entry name" value="AAA"/>
    <property type="match status" value="1"/>
</dbReference>
<dbReference type="SMART" id="SM00464">
    <property type="entry name" value="LON"/>
    <property type="match status" value="1"/>
</dbReference>
<dbReference type="SUPFAM" id="SSF52540">
    <property type="entry name" value="P-loop containing nucleoside triphosphate hydrolases"/>
    <property type="match status" value="1"/>
</dbReference>
<dbReference type="SUPFAM" id="SSF88697">
    <property type="entry name" value="PUA domain-like"/>
    <property type="match status" value="1"/>
</dbReference>
<dbReference type="SUPFAM" id="SSF54211">
    <property type="entry name" value="Ribosomal protein S5 domain 2-like"/>
    <property type="match status" value="1"/>
</dbReference>
<dbReference type="PROSITE" id="PS51787">
    <property type="entry name" value="LON_N"/>
    <property type="match status" value="1"/>
</dbReference>
<dbReference type="PROSITE" id="PS51786">
    <property type="entry name" value="LON_PROTEOLYTIC"/>
    <property type="match status" value="1"/>
</dbReference>
<dbReference type="PROSITE" id="PS01046">
    <property type="entry name" value="LON_SER"/>
    <property type="match status" value="1"/>
</dbReference>
<name>LON_BUCBP</name>
<reference key="1">
    <citation type="journal article" date="2003" name="Proc. Natl. Acad. Sci. U.S.A.">
        <title>Reductive genome evolution in Buchnera aphidicola.</title>
        <authorList>
            <person name="van Ham R.C.H.J."/>
            <person name="Kamerbeek J."/>
            <person name="Palacios C."/>
            <person name="Rausell C."/>
            <person name="Abascal F."/>
            <person name="Bastolla U."/>
            <person name="Fernandez J.M."/>
            <person name="Jimenez L."/>
            <person name="Postigo M."/>
            <person name="Silva F.J."/>
            <person name="Tamames J."/>
            <person name="Viguera E."/>
            <person name="Latorre A."/>
            <person name="Valencia A."/>
            <person name="Moran F."/>
            <person name="Moya A."/>
        </authorList>
    </citation>
    <scope>NUCLEOTIDE SEQUENCE [LARGE SCALE GENOMIC DNA]</scope>
    <source>
        <strain>Bp</strain>
    </source>
</reference>
<keyword id="KW-0067">ATP-binding</keyword>
<keyword id="KW-0963">Cytoplasm</keyword>
<keyword id="KW-0378">Hydrolase</keyword>
<keyword id="KW-0547">Nucleotide-binding</keyword>
<keyword id="KW-0645">Protease</keyword>
<keyword id="KW-1185">Reference proteome</keyword>
<keyword id="KW-0720">Serine protease</keyword>
<keyword id="KW-0346">Stress response</keyword>
<proteinExistence type="inferred from homology"/>
<sequence length="780" mass="88203">MNPERSEYIEIPVLPLRDVVIYPYMVIPLFVGRDKSIKCIEASMNKNKKIMLVTQKEAEIDEPTDNDLFTIGTTASILQMLKLPDGTVKVLVEGLQRAKVKKINNENGYFTAQIQLICTPEITEKEQSILIRTTLNQFENYVKFNKKISPEILNSLNNITNASQLSDMIAIHMPLKLSEKQSILETYNTNERLERLMAIMESEIDLLQVEKRIRNRVKKQMEKSQREYYLNEQMKAIQKELGEMDETLDEHEILKRKITTIKMPKEAQEKMASELHKLKMMSPMSAEATVVRSYIDWMIQIPWNIRSKVKKNLTQAQKILDSDHFGLDKVKERILEYLAVQSRINTVKGPILCLVGPPGVGKTSLGQSIARATGRKYIRMALGGIRDEAEIRGHRRTYIGSMPGKIIQKMAKVGVKNPLFLLDEIDKMSCDIRVDPASALLEVLDPEQNVAFNDHYLEVDYDLSNVMFIATSNSTNIPAPLLDRMEIIRISGYTEFEKLNIAKSYLKPKQIKRNALKSNELTIEDSVVTNIIRYYTREAGVRNLERELSKICRKCVKNLILNKSLKKIKITTDNLHDYLGIKKYDFGKTNYKNQIGQVIGLAWTEVGGELLTIEAACISGKGKLIYTGSLGEVMQESIQAALTVVRSQANKLGIKKNFYEKNDIHVHVPEGATPKDGPSAGIAMCTAIVSCLTGIPVKSDIAMTGEITLRGQILTIGGLKEKLLAAHRGGIKKVLIPYDNEKDLQEIPKTILKGLFVHPVKHIKEVLNLSLENTPYFSSK</sequence>
<gene>
    <name evidence="1" type="primary">lon</name>
    <name type="ordered locus">bbp_421</name>
</gene>
<comment type="function">
    <text evidence="1">ATP-dependent serine protease that mediates the selective degradation of mutant and abnormal proteins as well as certain short-lived regulatory proteins. Required for cellular homeostasis and for survival from DNA damage and developmental changes induced by stress. Degrades polypeptides processively to yield small peptide fragments that are 5 to 10 amino acids long. Binds to DNA in a double-stranded, site-specific manner.</text>
</comment>
<comment type="catalytic activity">
    <reaction evidence="1">
        <text>Hydrolysis of proteins in presence of ATP.</text>
        <dbReference type="EC" id="3.4.21.53"/>
    </reaction>
</comment>
<comment type="subunit">
    <text evidence="1">Homohexamer. Organized in a ring with a central cavity.</text>
</comment>
<comment type="subcellular location">
    <subcellularLocation>
        <location evidence="1">Cytoplasm</location>
    </subcellularLocation>
</comment>
<comment type="induction">
    <text evidence="1">By heat shock.</text>
</comment>
<comment type="similarity">
    <text evidence="1">Belongs to the peptidase S16 family.</text>
</comment>
<evidence type="ECO:0000255" key="1">
    <source>
        <dbReference type="HAMAP-Rule" id="MF_01973"/>
    </source>
</evidence>
<evidence type="ECO:0000255" key="2">
    <source>
        <dbReference type="PROSITE-ProRule" id="PRU01122"/>
    </source>
</evidence>
<evidence type="ECO:0000255" key="3">
    <source>
        <dbReference type="PROSITE-ProRule" id="PRU01123"/>
    </source>
</evidence>
<accession>Q89A99</accession>